<dbReference type="EMBL" id="D90191">
    <property type="protein sequence ID" value="BAA14215.1"/>
    <property type="status" value="ALT_TERM"/>
    <property type="molecule type" value="Genomic_RNA"/>
</dbReference>
<dbReference type="SMR" id="P0C6L8"/>
<dbReference type="Proteomes" id="UP000006827">
    <property type="component" value="Genome"/>
</dbReference>
<dbReference type="GO" id="GO:0043657">
    <property type="term" value="C:host cell"/>
    <property type="evidence" value="ECO:0007669"/>
    <property type="project" value="GOC"/>
</dbReference>
<dbReference type="GO" id="GO:0044196">
    <property type="term" value="C:host cell nucleolus"/>
    <property type="evidence" value="ECO:0007669"/>
    <property type="project" value="UniProtKB-SubCell"/>
</dbReference>
<dbReference type="GO" id="GO:0044423">
    <property type="term" value="C:virion component"/>
    <property type="evidence" value="ECO:0007669"/>
    <property type="project" value="UniProtKB-KW"/>
</dbReference>
<dbReference type="GO" id="GO:0003723">
    <property type="term" value="F:RNA binding"/>
    <property type="evidence" value="ECO:0007669"/>
    <property type="project" value="UniProtKB-KW"/>
</dbReference>
<dbReference type="GO" id="GO:0046718">
    <property type="term" value="P:symbiont entry into host cell"/>
    <property type="evidence" value="ECO:0007669"/>
    <property type="project" value="UniProtKB-KW"/>
</dbReference>
<dbReference type="GO" id="GO:0075732">
    <property type="term" value="P:viral penetration into host nucleus"/>
    <property type="evidence" value="ECO:0007669"/>
    <property type="project" value="UniProtKB-KW"/>
</dbReference>
<dbReference type="Gene3D" id="4.10.220.40">
    <property type="entry name" value="Delta antigen, N-terminal"/>
    <property type="match status" value="1"/>
</dbReference>
<dbReference type="InterPro" id="IPR027403">
    <property type="entry name" value="Delta_antigen_N"/>
</dbReference>
<dbReference type="InterPro" id="IPR037517">
    <property type="entry name" value="HDAG_dom"/>
</dbReference>
<dbReference type="InterPro" id="IPR002506">
    <property type="entry name" value="HDV_ag"/>
</dbReference>
<dbReference type="Pfam" id="PF01517">
    <property type="entry name" value="HDV_ag"/>
    <property type="match status" value="1"/>
</dbReference>
<dbReference type="SUPFAM" id="SSF58108">
    <property type="entry name" value="Oligomerization domain of hepatitis delta antigen"/>
    <property type="match status" value="1"/>
</dbReference>
<dbReference type="PROSITE" id="PS51838">
    <property type="entry name" value="HDAG"/>
    <property type="match status" value="1"/>
</dbReference>
<evidence type="ECO:0000250" key="1"/>
<evidence type="ECO:0000250" key="2">
    <source>
        <dbReference type="UniProtKB" id="P0C6L3"/>
    </source>
</evidence>
<evidence type="ECO:0000250" key="3">
    <source>
        <dbReference type="UniProtKB" id="P29996"/>
    </source>
</evidence>
<evidence type="ECO:0000255" key="4"/>
<evidence type="ECO:0000255" key="5">
    <source>
        <dbReference type="PROSITE-ProRule" id="PRU01183"/>
    </source>
</evidence>
<evidence type="ECO:0000256" key="6">
    <source>
        <dbReference type="SAM" id="MobiDB-lite"/>
    </source>
</evidence>
<evidence type="ECO:0000305" key="7"/>
<comment type="function">
    <text evidence="1">Following virus entry into host cell, provides nuclear import of HDV RNPs thanks to its nuclear localization signal. Needs co-infection with hepatitis B virus to provide surface proteins, otherwise there is no packaging or budding. Packages the HDV ribonucleoprotein in hepatitis B virus empty particles. Interacts with both HDV genomic RNA and cytoplasmic tail of HBsAg. May inhibit viral RNA replication (By similarity).</text>
</comment>
<comment type="subunit">
    <text evidence="1">Homodimer. Homooctamer. Interacts with HBV HBsAg. May interact with clathrin to induce virion budding (By similarity).</text>
</comment>
<comment type="subcellular location">
    <subcellularLocation>
        <location>Virion</location>
    </subcellularLocation>
    <subcellularLocation>
        <location>Host nucleus</location>
        <location>Host nucleolus</location>
    </subcellularLocation>
    <text evidence="1">isoprenylated in the cytoplasm, and translocates in the nucleus possibly after phosphorylation. Translocates after to nuclear speckle, then to the ER membrane where interaction with Hepatitis B virus antigene takes place (By similarity).</text>
</comment>
<comment type="PTM">
    <text evidence="1">Prenylated by host farnesyl-transferase in the cytoplasm prior to nucleus translocation.</text>
</comment>
<comment type="PTM">
    <text evidence="1">Phosphorylated at serines by host CK2 and other kinases. phosphorylation does not seem to be important for its function (By similarity).</text>
</comment>
<comment type="RNA editing">
    <location>
        <position position="196" evidence="1"/>
    </location>
    <text evidence="1">Partially edited. RNA editing at this position occurs on the antigenomic strand and consists of a conversion of A to G catalyzed by the cellular enzyme ADAR1. The unedited RNA version gives rise to the small delta antigen (AC P25882), which ends with a nonsense codon at position 196. In the edited version, this amber codon is modified to a tryptophan codon and gives rise to the large delta antigen protein. S-HDAg suppresses editing of non-replicating antigenomic RNA, thereby regulating the extent of editing (By similarity).</text>
</comment>
<comment type="miscellaneous">
    <text>This strain belongs to the genotype I found in North America, Europe, Africa, East and West Asia and the South Pacific.</text>
</comment>
<comment type="similarity">
    <text evidence="7">Belongs to the hepatitis delta antigen family.</text>
</comment>
<sequence>MSRSESKGKRAGREQILEQWVDGRKKLEELERDLRKIKKKIKKLEEENPWLGNVKGILGKKDKDGEGAPPAKRARTDQMEVDTGPRKRPLRGGFSDKERQDHRRRKALENKKKQLSAGGKNLSKEEEEELKRLTEEDERRERRVAGPSVGGVNPLEGGPRGAPGGGFVPNMQGVPESPFTRTGEGLDVTGNLGFPWDILFPADPPFSPQSCRPQ</sequence>
<keyword id="KW-0007">Acetylation</keyword>
<keyword id="KW-1048">Host nucleus</keyword>
<keyword id="KW-0449">Lipoprotein</keyword>
<keyword id="KW-0488">Methylation</keyword>
<keyword id="KW-0597">Phosphoprotein</keyword>
<keyword id="KW-0636">Prenylation</keyword>
<keyword id="KW-0691">RNA editing</keyword>
<keyword id="KW-0694">RNA-binding</keyword>
<keyword id="KW-1163">Viral penetration into host nucleus</keyword>
<keyword id="KW-0946">Virion</keyword>
<keyword id="KW-1160">Virus entry into host cell</keyword>
<organism>
    <name type="scientific">Hepatitis delta virus genotype I (isolate Japanese M-2)</name>
    <name type="common">HDV</name>
    <dbReference type="NCBI Taxonomy" id="10425"/>
    <lineage>
        <taxon>Viruses</taxon>
        <taxon>Ribozyviria</taxon>
        <taxon>Kolmioviridae</taxon>
        <taxon>Deltavirus</taxon>
        <taxon>Hepatitis delta virus</taxon>
    </lineage>
</organism>
<name>LHDAG_HDVM2</name>
<protein>
    <recommendedName>
        <fullName>Large delta antigen</fullName>
        <shortName>L-HDAg</shortName>
    </recommendedName>
    <alternativeName>
        <fullName>p27</fullName>
    </alternativeName>
</protein>
<accession>P0C6L8</accession>
<feature type="chain" id="PRO_0000038138" description="Large delta antigen">
    <location>
        <begin position="1"/>
        <end position="211"/>
    </location>
</feature>
<feature type="propeptide" id="PRO_0000396790" description="Removed in mature form" evidence="3">
    <location>
        <begin position="212"/>
        <end position="214"/>
    </location>
</feature>
<feature type="domain" description="HDAg" evidence="5">
    <location>
        <begin position="20"/>
        <end position="195"/>
    </location>
</feature>
<feature type="region of interest" description="Dimerization" evidence="4">
    <location>
        <begin position="12"/>
        <end position="60"/>
    </location>
</feature>
<feature type="region of interest" description="Disordered" evidence="6">
    <location>
        <begin position="48"/>
        <end position="188"/>
    </location>
</feature>
<feature type="region of interest" description="RNA-binding" evidence="5">
    <location>
        <begin position="97"/>
        <end position="107"/>
    </location>
</feature>
<feature type="region of interest" description="RNAPII-binding" evidence="5">
    <location>
        <begin position="130"/>
        <end position="195"/>
    </location>
</feature>
<feature type="region of interest" description="RNA-binding" evidence="5">
    <location>
        <begin position="136"/>
        <end position="146"/>
    </location>
</feature>
<feature type="short sequence motif" description="Nuclear localization signal" evidence="3">
    <location>
        <begin position="66"/>
        <end position="75"/>
    </location>
</feature>
<feature type="compositionally biased region" description="Basic and acidic residues" evidence="6">
    <location>
        <begin position="94"/>
        <end position="112"/>
    </location>
</feature>
<feature type="compositionally biased region" description="Basic and acidic residues" evidence="6">
    <location>
        <begin position="129"/>
        <end position="144"/>
    </location>
</feature>
<feature type="compositionally biased region" description="Gly residues" evidence="6">
    <location>
        <begin position="158"/>
        <end position="167"/>
    </location>
</feature>
<feature type="modified residue" description="Phosphoserine; by host" evidence="3">
    <location>
        <position position="2"/>
    </location>
</feature>
<feature type="modified residue" description="Omega-N-methylated arginine; by host" evidence="2">
    <location>
        <position position="13"/>
    </location>
</feature>
<feature type="modified residue" description="N6-acetyllysine; by host" evidence="2">
    <location>
        <position position="72"/>
    </location>
</feature>
<feature type="modified residue" description="Phosphoserine; by host" evidence="3">
    <location>
        <position position="123"/>
    </location>
</feature>
<feature type="modified residue" description="Phosphoserine; by host" evidence="3">
    <location>
        <position position="177"/>
    </location>
</feature>
<feature type="modified residue" description="Cysteine methyl ester; by host" evidence="3">
    <location>
        <position position="211"/>
    </location>
</feature>
<feature type="lipid moiety-binding region" description="S-farnesyl cysteine; by host" evidence="3">
    <location>
        <position position="211"/>
    </location>
</feature>
<reference key="1">
    <citation type="journal article" date="1990" name="J. Virol.">
        <title>Heterogeneity and evolution rates of delta virus RNA sequences.</title>
        <authorList>
            <person name="Imazeki F."/>
            <person name="Omata M."/>
            <person name="Ohto M."/>
        </authorList>
    </citation>
    <scope>NUCLEOTIDE SEQUENCE [GENOMIC RNA]</scope>
</reference>
<reference key="2">
    <citation type="journal article" date="2005" name="Acta Virol.">
        <title>Hepatitis D.</title>
        <authorList>
            <person name="Husa P."/>
            <person name="Linhartova A."/>
            <person name="Nemecek V."/>
            <person name="Husova L."/>
        </authorList>
    </citation>
    <scope>REVIEW</scope>
</reference>
<reference key="3">
    <citation type="journal article" date="2006" name="Curr. Top. Microbiol. Immunol.">
        <title>Post-translational modification of delta antigen of hepatitis D virus.</title>
        <authorList>
            <person name="Huang W.H."/>
            <person name="Chen C.W."/>
            <person name="Wu H.L."/>
            <person name="Chen P.J."/>
        </authorList>
    </citation>
    <scope>REVIEW</scope>
</reference>
<proteinExistence type="inferred from homology"/>
<organismHost>
    <name type="scientific">Homo sapiens</name>
    <name type="common">Human</name>
    <dbReference type="NCBI Taxonomy" id="9606"/>
</organismHost>